<reference key="1">
    <citation type="journal article" date="2005" name="Infect. Immun.">
        <title>Comparative genomic analysis of Chlamydia trachomatis oculotropic and genitotropic strains.</title>
        <authorList>
            <person name="Carlson J.H."/>
            <person name="Porcella S.F."/>
            <person name="McClarty G."/>
            <person name="Caldwell H.D."/>
        </authorList>
    </citation>
    <scope>NUCLEOTIDE SEQUENCE [LARGE SCALE GENOMIC DNA]</scope>
    <source>
        <strain>ATCC VR-571B / DSM 19440 / HAR-13</strain>
    </source>
</reference>
<protein>
    <recommendedName>
        <fullName evidence="1">Small ribosomal subunit protein uS14</fullName>
    </recommendedName>
    <alternativeName>
        <fullName evidence="2">30S ribosomal protein S14</fullName>
    </alternativeName>
</protein>
<feature type="chain" id="PRO_1000128359" description="Small ribosomal subunit protein uS14">
    <location>
        <begin position="1"/>
        <end position="101"/>
    </location>
</feature>
<comment type="function">
    <text evidence="1">Binds 16S rRNA, required for the assembly of 30S particles and may also be responsible for determining the conformation of the 16S rRNA at the A site.</text>
</comment>
<comment type="subunit">
    <text evidence="1">Part of the 30S ribosomal subunit. Contacts proteins S3 and S10.</text>
</comment>
<comment type="similarity">
    <text evidence="1">Belongs to the universal ribosomal protein uS14 family.</text>
</comment>
<name>RS14_CHLTA</name>
<accession>Q3KKQ5</accession>
<gene>
    <name evidence="1" type="primary">rpsN</name>
    <name type="ordered locus">CTA_0857</name>
</gene>
<sequence>MAKKSAVAREVKRRKLVEANFQKRAELRKLAKSLSVSEEERERAREALNKMRRDTSPSRLHNRCLLTGRPRGYLRKFAISRICFRQMASMGDIPGVVKASW</sequence>
<evidence type="ECO:0000255" key="1">
    <source>
        <dbReference type="HAMAP-Rule" id="MF_00537"/>
    </source>
</evidence>
<evidence type="ECO:0000305" key="2"/>
<dbReference type="EMBL" id="CP000051">
    <property type="protein sequence ID" value="AAX51067.1"/>
    <property type="molecule type" value="Genomic_DNA"/>
</dbReference>
<dbReference type="RefSeq" id="WP_009872167.1">
    <property type="nucleotide sequence ID" value="NC_007429.1"/>
</dbReference>
<dbReference type="SMR" id="Q3KKQ5"/>
<dbReference type="KEGG" id="cta:CTA_0857"/>
<dbReference type="HOGENOM" id="CLU_139869_0_1_0"/>
<dbReference type="Proteomes" id="UP000002532">
    <property type="component" value="Chromosome"/>
</dbReference>
<dbReference type="GO" id="GO:0005737">
    <property type="term" value="C:cytoplasm"/>
    <property type="evidence" value="ECO:0007669"/>
    <property type="project" value="UniProtKB-ARBA"/>
</dbReference>
<dbReference type="GO" id="GO:0015935">
    <property type="term" value="C:small ribosomal subunit"/>
    <property type="evidence" value="ECO:0007669"/>
    <property type="project" value="TreeGrafter"/>
</dbReference>
<dbReference type="GO" id="GO:0019843">
    <property type="term" value="F:rRNA binding"/>
    <property type="evidence" value="ECO:0007669"/>
    <property type="project" value="UniProtKB-UniRule"/>
</dbReference>
<dbReference type="GO" id="GO:0003735">
    <property type="term" value="F:structural constituent of ribosome"/>
    <property type="evidence" value="ECO:0007669"/>
    <property type="project" value="InterPro"/>
</dbReference>
<dbReference type="GO" id="GO:0006412">
    <property type="term" value="P:translation"/>
    <property type="evidence" value="ECO:0007669"/>
    <property type="project" value="UniProtKB-UniRule"/>
</dbReference>
<dbReference type="FunFam" id="1.10.287.1480:FF:000001">
    <property type="entry name" value="30S ribosomal protein S14"/>
    <property type="match status" value="1"/>
</dbReference>
<dbReference type="Gene3D" id="1.10.287.1480">
    <property type="match status" value="1"/>
</dbReference>
<dbReference type="HAMAP" id="MF_00537">
    <property type="entry name" value="Ribosomal_uS14_1"/>
    <property type="match status" value="1"/>
</dbReference>
<dbReference type="InterPro" id="IPR001209">
    <property type="entry name" value="Ribosomal_uS14"/>
</dbReference>
<dbReference type="InterPro" id="IPR023036">
    <property type="entry name" value="Ribosomal_uS14_bac/plastid"/>
</dbReference>
<dbReference type="InterPro" id="IPR018271">
    <property type="entry name" value="Ribosomal_uS14_CS"/>
</dbReference>
<dbReference type="NCBIfam" id="NF006477">
    <property type="entry name" value="PRK08881.1"/>
    <property type="match status" value="1"/>
</dbReference>
<dbReference type="PANTHER" id="PTHR19836">
    <property type="entry name" value="30S RIBOSOMAL PROTEIN S14"/>
    <property type="match status" value="1"/>
</dbReference>
<dbReference type="PANTHER" id="PTHR19836:SF19">
    <property type="entry name" value="SMALL RIBOSOMAL SUBUNIT PROTEIN US14M"/>
    <property type="match status" value="1"/>
</dbReference>
<dbReference type="Pfam" id="PF00253">
    <property type="entry name" value="Ribosomal_S14"/>
    <property type="match status" value="1"/>
</dbReference>
<dbReference type="SUPFAM" id="SSF57716">
    <property type="entry name" value="Glucocorticoid receptor-like (DNA-binding domain)"/>
    <property type="match status" value="1"/>
</dbReference>
<dbReference type="PROSITE" id="PS00527">
    <property type="entry name" value="RIBOSOMAL_S14"/>
    <property type="match status" value="1"/>
</dbReference>
<organism>
    <name type="scientific">Chlamydia trachomatis serovar A (strain ATCC VR-571B / DSM 19440 / HAR-13)</name>
    <dbReference type="NCBI Taxonomy" id="315277"/>
    <lineage>
        <taxon>Bacteria</taxon>
        <taxon>Pseudomonadati</taxon>
        <taxon>Chlamydiota</taxon>
        <taxon>Chlamydiia</taxon>
        <taxon>Chlamydiales</taxon>
        <taxon>Chlamydiaceae</taxon>
        <taxon>Chlamydia/Chlamydophila group</taxon>
        <taxon>Chlamydia</taxon>
    </lineage>
</organism>
<proteinExistence type="inferred from homology"/>
<keyword id="KW-0687">Ribonucleoprotein</keyword>
<keyword id="KW-0689">Ribosomal protein</keyword>
<keyword id="KW-0694">RNA-binding</keyword>
<keyword id="KW-0699">rRNA-binding</keyword>